<organism>
    <name type="scientific">Yersinia pestis bv. Antiqua (strain Antiqua)</name>
    <dbReference type="NCBI Taxonomy" id="360102"/>
    <lineage>
        <taxon>Bacteria</taxon>
        <taxon>Pseudomonadati</taxon>
        <taxon>Pseudomonadota</taxon>
        <taxon>Gammaproteobacteria</taxon>
        <taxon>Enterobacterales</taxon>
        <taxon>Yersiniaceae</taxon>
        <taxon>Yersinia</taxon>
    </lineage>
</organism>
<reference key="1">
    <citation type="journal article" date="2006" name="J. Bacteriol.">
        <title>Complete genome sequence of Yersinia pestis strains Antiqua and Nepal516: evidence of gene reduction in an emerging pathogen.</title>
        <authorList>
            <person name="Chain P.S.G."/>
            <person name="Hu P."/>
            <person name="Malfatti S.A."/>
            <person name="Radnedge L."/>
            <person name="Larimer F."/>
            <person name="Vergez L.M."/>
            <person name="Worsham P."/>
            <person name="Chu M.C."/>
            <person name="Andersen G.L."/>
        </authorList>
    </citation>
    <scope>NUCLEOTIDE SEQUENCE [LARGE SCALE GENOMIC DNA]</scope>
    <source>
        <strain>Antiqua</strain>
    </source>
</reference>
<sequence>MAKFIQHIGLVAPLDAANVDTDAIIPKQFLQKVTRTGFGQHLFNDWRFLDDASKVPNPDFVLNLPRYQGATILLARENFGCGSSREHAPWALTDFGFKVVIAPSFADIFYGNAFNNQLLPVTLSEADIDTLFQLVKENEGIEFVVDLEQQTVNAGGKSYAFEIDPFRRHCMINGLDSIGLTLQHEHNISAYEKQQPEFLR</sequence>
<keyword id="KW-0028">Amino-acid biosynthesis</keyword>
<keyword id="KW-0100">Branched-chain amino acid biosynthesis</keyword>
<keyword id="KW-0432">Leucine biosynthesis</keyword>
<keyword id="KW-0456">Lyase</keyword>
<accession>Q1C1Z3</accession>
<comment type="function">
    <text evidence="1">Catalyzes the isomerization between 2-isopropylmalate and 3-isopropylmalate, via the formation of 2-isopropylmaleate.</text>
</comment>
<comment type="catalytic activity">
    <reaction evidence="1">
        <text>(2R,3S)-3-isopropylmalate = (2S)-2-isopropylmalate</text>
        <dbReference type="Rhea" id="RHEA:32287"/>
        <dbReference type="ChEBI" id="CHEBI:1178"/>
        <dbReference type="ChEBI" id="CHEBI:35121"/>
        <dbReference type="EC" id="4.2.1.33"/>
    </reaction>
</comment>
<comment type="pathway">
    <text evidence="1">Amino-acid biosynthesis; L-leucine biosynthesis; L-leucine from 3-methyl-2-oxobutanoate: step 2/4.</text>
</comment>
<comment type="subunit">
    <text evidence="1">Heterodimer of LeuC and LeuD.</text>
</comment>
<comment type="similarity">
    <text evidence="1">Belongs to the LeuD family. LeuD type 1 subfamily.</text>
</comment>
<proteinExistence type="inferred from homology"/>
<protein>
    <recommendedName>
        <fullName evidence="1">3-isopropylmalate dehydratase small subunit</fullName>
        <ecNumber evidence="1">4.2.1.33</ecNumber>
    </recommendedName>
    <alternativeName>
        <fullName evidence="1">Alpha-IPM isomerase</fullName>
        <shortName evidence="1">IPMI</shortName>
    </alternativeName>
    <alternativeName>
        <fullName evidence="1">Isopropylmalate isomerase</fullName>
    </alternativeName>
</protein>
<name>LEUD_YERPA</name>
<dbReference type="EC" id="4.2.1.33" evidence="1"/>
<dbReference type="EMBL" id="CP000308">
    <property type="protein sequence ID" value="ABG15529.1"/>
    <property type="molecule type" value="Genomic_DNA"/>
</dbReference>
<dbReference type="RefSeq" id="WP_002220586.1">
    <property type="nucleotide sequence ID" value="NC_008150.1"/>
</dbReference>
<dbReference type="SMR" id="Q1C1Z3"/>
<dbReference type="KEGG" id="ypa:YPA_3567"/>
<dbReference type="UniPathway" id="UPA00048">
    <property type="reaction ID" value="UER00071"/>
</dbReference>
<dbReference type="Proteomes" id="UP000001971">
    <property type="component" value="Chromosome"/>
</dbReference>
<dbReference type="GO" id="GO:0009316">
    <property type="term" value="C:3-isopropylmalate dehydratase complex"/>
    <property type="evidence" value="ECO:0007669"/>
    <property type="project" value="InterPro"/>
</dbReference>
<dbReference type="GO" id="GO:0003861">
    <property type="term" value="F:3-isopropylmalate dehydratase activity"/>
    <property type="evidence" value="ECO:0007669"/>
    <property type="project" value="UniProtKB-UniRule"/>
</dbReference>
<dbReference type="GO" id="GO:0009098">
    <property type="term" value="P:L-leucine biosynthetic process"/>
    <property type="evidence" value="ECO:0007669"/>
    <property type="project" value="UniProtKB-UniRule"/>
</dbReference>
<dbReference type="CDD" id="cd01577">
    <property type="entry name" value="IPMI_Swivel"/>
    <property type="match status" value="1"/>
</dbReference>
<dbReference type="FunFam" id="3.20.19.10:FF:000003">
    <property type="entry name" value="3-isopropylmalate dehydratase small subunit"/>
    <property type="match status" value="1"/>
</dbReference>
<dbReference type="Gene3D" id="3.20.19.10">
    <property type="entry name" value="Aconitase, domain 4"/>
    <property type="match status" value="1"/>
</dbReference>
<dbReference type="HAMAP" id="MF_01031">
    <property type="entry name" value="LeuD_type1"/>
    <property type="match status" value="1"/>
</dbReference>
<dbReference type="InterPro" id="IPR004431">
    <property type="entry name" value="3-IsopropMal_deHydase_ssu"/>
</dbReference>
<dbReference type="InterPro" id="IPR015928">
    <property type="entry name" value="Aconitase/3IPM_dehydase_swvl"/>
</dbReference>
<dbReference type="InterPro" id="IPR000573">
    <property type="entry name" value="AconitaseA/IPMdHydase_ssu_swvl"/>
</dbReference>
<dbReference type="InterPro" id="IPR033940">
    <property type="entry name" value="IPMI_Swivel"/>
</dbReference>
<dbReference type="InterPro" id="IPR050075">
    <property type="entry name" value="LeuD"/>
</dbReference>
<dbReference type="NCBIfam" id="TIGR00171">
    <property type="entry name" value="leuD"/>
    <property type="match status" value="1"/>
</dbReference>
<dbReference type="NCBIfam" id="NF002458">
    <property type="entry name" value="PRK01641.1"/>
    <property type="match status" value="1"/>
</dbReference>
<dbReference type="PANTHER" id="PTHR43345:SF5">
    <property type="entry name" value="3-ISOPROPYLMALATE DEHYDRATASE SMALL SUBUNIT"/>
    <property type="match status" value="1"/>
</dbReference>
<dbReference type="PANTHER" id="PTHR43345">
    <property type="entry name" value="3-ISOPROPYLMALATE DEHYDRATASE SMALL SUBUNIT 2-RELATED-RELATED"/>
    <property type="match status" value="1"/>
</dbReference>
<dbReference type="Pfam" id="PF00694">
    <property type="entry name" value="Aconitase_C"/>
    <property type="match status" value="1"/>
</dbReference>
<dbReference type="SUPFAM" id="SSF52016">
    <property type="entry name" value="LeuD/IlvD-like"/>
    <property type="match status" value="1"/>
</dbReference>
<evidence type="ECO:0000255" key="1">
    <source>
        <dbReference type="HAMAP-Rule" id="MF_01031"/>
    </source>
</evidence>
<feature type="chain" id="PRO_1000063859" description="3-isopropylmalate dehydratase small subunit">
    <location>
        <begin position="1"/>
        <end position="200"/>
    </location>
</feature>
<gene>
    <name evidence="1" type="primary">leuD</name>
    <name type="ordered locus">YPA_3567</name>
</gene>